<name>NEP_I77A4</name>
<protein>
    <recommendedName>
        <fullName evidence="1">Nuclear export protein</fullName>
        <shortName evidence="1">NEP</shortName>
    </recommendedName>
    <alternativeName>
        <fullName evidence="1">Non-structural protein 2</fullName>
        <shortName evidence="1">NS2</shortName>
    </alternativeName>
</protein>
<dbReference type="EMBL" id="CY009304">
    <property type="protein sequence ID" value="ABD61557.1"/>
    <property type="molecule type" value="Genomic_RNA"/>
</dbReference>
<dbReference type="SMR" id="Q288Z1"/>
<dbReference type="Proteomes" id="UP000009193">
    <property type="component" value="Genome"/>
</dbReference>
<dbReference type="GO" id="GO:0042025">
    <property type="term" value="C:host cell nucleus"/>
    <property type="evidence" value="ECO:0007669"/>
    <property type="project" value="UniProtKB-SubCell"/>
</dbReference>
<dbReference type="GO" id="GO:0044423">
    <property type="term" value="C:virion component"/>
    <property type="evidence" value="ECO:0007669"/>
    <property type="project" value="UniProtKB-UniRule"/>
</dbReference>
<dbReference type="GO" id="GO:0039675">
    <property type="term" value="P:exit of virus from host cell nucleus through nuclear pore"/>
    <property type="evidence" value="ECO:0007669"/>
    <property type="project" value="UniProtKB-UniRule"/>
</dbReference>
<dbReference type="Gene3D" id="1.10.287.230">
    <property type="match status" value="1"/>
</dbReference>
<dbReference type="Gene3D" id="1.10.287.10">
    <property type="entry name" value="S15/NS1, RNA-binding"/>
    <property type="match status" value="1"/>
</dbReference>
<dbReference type="HAMAP" id="MF_04067">
    <property type="entry name" value="INFV_NEP"/>
    <property type="match status" value="1"/>
</dbReference>
<dbReference type="InterPro" id="IPR000968">
    <property type="entry name" value="Flu_NS2"/>
</dbReference>
<dbReference type="Pfam" id="PF00601">
    <property type="entry name" value="Flu_NS2"/>
    <property type="match status" value="1"/>
</dbReference>
<dbReference type="SUPFAM" id="SSF101156">
    <property type="entry name" value="Nonstructural protein ns2, Nep, M1-binding domain"/>
    <property type="match status" value="1"/>
</dbReference>
<evidence type="ECO:0000255" key="1">
    <source>
        <dbReference type="HAMAP-Rule" id="MF_04067"/>
    </source>
</evidence>
<gene>
    <name evidence="1" type="primary">NS</name>
</gene>
<reference key="1">
    <citation type="submission" date="2006-03" db="EMBL/GenBank/DDBJ databases">
        <title>The NIAID influenza genome sequencing project.</title>
        <authorList>
            <person name="Ghedin E."/>
            <person name="Spiro D."/>
            <person name="Miller N."/>
            <person name="Zaborsky J."/>
            <person name="Feldblyum T."/>
            <person name="Subbu V."/>
            <person name="Shumway M."/>
            <person name="Sparenborg J."/>
            <person name="Groveman L."/>
            <person name="Halpin R."/>
            <person name="Sitz J."/>
            <person name="Koo H."/>
            <person name="Salzberg S.L."/>
            <person name="Webster R.G."/>
            <person name="Hoffmann E."/>
            <person name="Krauss S."/>
            <person name="Naeve C."/>
            <person name="Bao Y."/>
            <person name="Bolotov P."/>
            <person name="Dernovoy D."/>
            <person name="Kiryutin B."/>
            <person name="Lipman D.J."/>
            <person name="Tatusova T."/>
        </authorList>
    </citation>
    <scope>NUCLEOTIDE SEQUENCE [GENOMIC RNA]</scope>
</reference>
<organismHost>
    <name type="scientific">Aves</name>
    <dbReference type="NCBI Taxonomy" id="8782"/>
</organismHost>
<organismHost>
    <name type="scientific">Cetacea</name>
    <name type="common">whales</name>
    <dbReference type="NCBI Taxonomy" id="9721"/>
</organismHost>
<organismHost>
    <name type="scientific">Homo sapiens</name>
    <name type="common">Human</name>
    <dbReference type="NCBI Taxonomy" id="9606"/>
</organismHost>
<organismHost>
    <name type="scientific">Phocidae</name>
    <name type="common">true seals</name>
    <dbReference type="NCBI Taxonomy" id="9709"/>
</organismHost>
<organismHost>
    <name type="scientific">Sus scrofa</name>
    <name type="common">Pig</name>
    <dbReference type="NCBI Taxonomy" id="9823"/>
</organismHost>
<accession>Q288Z1</accession>
<comment type="function">
    <text evidence="1">Mediates the nuclear export of encapsidated genomic RNAs (ribonucleoproteins, RNPs). Acts as an adapter between viral RNPs complexes and the nuclear export machinery of the cell. Possesses no intrinsic RNA-binding activity, but includes a C-terminal M1-binding domain. This domain is believed to allow recognition of RNPs bound to the protein M1. Since protein M1 is not available in large quantities before late stages of infection, such an indirect recognition mechanism probably ensures that genomic RNPs are not exported from the host nucleus until sufficient quantities of viral mRNA and progeny genomic RNA have been synthesized. Furthermore, the RNPs enter the host cytoplasm only when associated with the M1 protein that is necessary to guide them to the plasma membrane. May down-regulate viral RNA synthesis when overproduced.</text>
</comment>
<comment type="subunit">
    <text evidence="1">Interacts with protein M1. May interact with host nucleoporin RAB/HRB and exportin XPO1/CRM1.</text>
</comment>
<comment type="subcellular location">
    <subcellularLocation>
        <location evidence="1">Virion</location>
    </subcellularLocation>
    <subcellularLocation>
        <location evidence="1">Host nucleus</location>
    </subcellularLocation>
</comment>
<comment type="alternative products">
    <event type="alternative splicing"/>
    <isoform>
        <id>Q288Z1-1</id>
        <name>NEP</name>
        <name>NS2</name>
        <sequence type="displayed"/>
    </isoform>
    <isoform>
        <id>Q288Z0-1</id>
        <name>NS1</name>
        <sequence type="external"/>
    </isoform>
</comment>
<comment type="similarity">
    <text evidence="1">Belongs to the influenza viruses NEP family.</text>
</comment>
<proteinExistence type="inferred from homology"/>
<sequence length="121" mass="14365">MDSNTVSSFQDILLRMSKMQLGSSSEDLNGMITQFESLKLYRDSLGEAVMRMGDLHLLQNRNGKWREQLGQKFEEIRWLIEEVRHRLKTTENSFEQITFMQALQLLFEVEQEIRTFSFQLI</sequence>
<organism>
    <name type="scientific">Influenza A virus (strain A/Swine/Colorado/1/1977 H3N2)</name>
    <dbReference type="NCBI Taxonomy" id="385645"/>
    <lineage>
        <taxon>Viruses</taxon>
        <taxon>Riboviria</taxon>
        <taxon>Orthornavirae</taxon>
        <taxon>Negarnaviricota</taxon>
        <taxon>Polyploviricotina</taxon>
        <taxon>Insthoviricetes</taxon>
        <taxon>Articulavirales</taxon>
        <taxon>Orthomyxoviridae</taxon>
        <taxon>Alphainfluenzavirus</taxon>
        <taxon>Alphainfluenzavirus influenzae</taxon>
        <taxon>Influenza A virus</taxon>
    </lineage>
</organism>
<feature type="chain" id="PRO_0000324214" description="Nuclear export protein">
    <location>
        <begin position="1"/>
        <end position="121"/>
    </location>
</feature>
<feature type="short sequence motif" description="Nuclear export signal" evidence="1">
    <location>
        <begin position="12"/>
        <end position="21"/>
    </location>
</feature>
<feature type="short sequence motif" description="Nuclear export signal" evidence="1">
    <location>
        <begin position="85"/>
        <end position="94"/>
    </location>
</feature>
<keyword id="KW-0025">Alternative splicing</keyword>
<keyword id="KW-1048">Host nucleus</keyword>
<keyword id="KW-0945">Host-virus interaction</keyword>
<keyword id="KW-0813">Transport</keyword>
<keyword id="KW-0946">Virion</keyword>